<proteinExistence type="evidence at transcript level"/>
<name>RSLAA_MOUSE</name>
<keyword id="KW-1003">Cell membrane</keyword>
<keyword id="KW-0342">GTP-binding</keyword>
<keyword id="KW-0378">Hydrolase</keyword>
<keyword id="KW-0449">Lipoprotein</keyword>
<keyword id="KW-0472">Membrane</keyword>
<keyword id="KW-0488">Methylation</keyword>
<keyword id="KW-0547">Nucleotide-binding</keyword>
<keyword id="KW-0539">Nucleus</keyword>
<keyword id="KW-0636">Prenylation</keyword>
<keyword id="KW-1185">Reference proteome</keyword>
<keyword id="KW-0043">Tumor suppressor</keyword>
<gene>
    <name type="primary">Rasl10a</name>
    <name type="synonym">Rrp22</name>
</gene>
<protein>
    <recommendedName>
        <fullName>Ras-like protein family member 10A</fullName>
        <ecNumber evidence="2">3.6.5.2</ecNumber>
    </recommendedName>
    <alternativeName>
        <fullName>Ras-like protein RRP22</fullName>
    </alternativeName>
    <alternativeName>
        <fullName>Ras-related protein on chromosome 22 homolog</fullName>
    </alternativeName>
</protein>
<reference key="1">
    <citation type="submission" date="2002-03" db="EMBL/GenBank/DDBJ databases">
        <authorList>
            <person name="Ehringer M.A."/>
            <person name="Thompson J."/>
            <person name="Conroy O."/>
            <person name="Xu Y."/>
            <person name="Yang F."/>
            <person name="Canniff J."/>
            <person name="Beeson M."/>
            <person name="Gordon L."/>
            <person name="Bennett B."/>
            <person name="Johnson T.E."/>
            <person name="Sikela J.M."/>
        </authorList>
    </citation>
    <scope>NUCLEOTIDE SEQUENCE [MRNA]</scope>
    <source>
        <strain>ISS</strain>
    </source>
</reference>
<reference key="2">
    <citation type="journal article" date="2005" name="Science">
        <title>The transcriptional landscape of the mammalian genome.</title>
        <authorList>
            <person name="Carninci P."/>
            <person name="Kasukawa T."/>
            <person name="Katayama S."/>
            <person name="Gough J."/>
            <person name="Frith M.C."/>
            <person name="Maeda N."/>
            <person name="Oyama R."/>
            <person name="Ravasi T."/>
            <person name="Lenhard B."/>
            <person name="Wells C."/>
            <person name="Kodzius R."/>
            <person name="Shimokawa K."/>
            <person name="Bajic V.B."/>
            <person name="Brenner S.E."/>
            <person name="Batalov S."/>
            <person name="Forrest A.R."/>
            <person name="Zavolan M."/>
            <person name="Davis M.J."/>
            <person name="Wilming L.G."/>
            <person name="Aidinis V."/>
            <person name="Allen J.E."/>
            <person name="Ambesi-Impiombato A."/>
            <person name="Apweiler R."/>
            <person name="Aturaliya R.N."/>
            <person name="Bailey T.L."/>
            <person name="Bansal M."/>
            <person name="Baxter L."/>
            <person name="Beisel K.W."/>
            <person name="Bersano T."/>
            <person name="Bono H."/>
            <person name="Chalk A.M."/>
            <person name="Chiu K.P."/>
            <person name="Choudhary V."/>
            <person name="Christoffels A."/>
            <person name="Clutterbuck D.R."/>
            <person name="Crowe M.L."/>
            <person name="Dalla E."/>
            <person name="Dalrymple B.P."/>
            <person name="de Bono B."/>
            <person name="Della Gatta G."/>
            <person name="di Bernardo D."/>
            <person name="Down T."/>
            <person name="Engstrom P."/>
            <person name="Fagiolini M."/>
            <person name="Faulkner G."/>
            <person name="Fletcher C.F."/>
            <person name="Fukushima T."/>
            <person name="Furuno M."/>
            <person name="Futaki S."/>
            <person name="Gariboldi M."/>
            <person name="Georgii-Hemming P."/>
            <person name="Gingeras T.R."/>
            <person name="Gojobori T."/>
            <person name="Green R.E."/>
            <person name="Gustincich S."/>
            <person name="Harbers M."/>
            <person name="Hayashi Y."/>
            <person name="Hensch T.K."/>
            <person name="Hirokawa N."/>
            <person name="Hill D."/>
            <person name="Huminiecki L."/>
            <person name="Iacono M."/>
            <person name="Ikeo K."/>
            <person name="Iwama A."/>
            <person name="Ishikawa T."/>
            <person name="Jakt M."/>
            <person name="Kanapin A."/>
            <person name="Katoh M."/>
            <person name="Kawasawa Y."/>
            <person name="Kelso J."/>
            <person name="Kitamura H."/>
            <person name="Kitano H."/>
            <person name="Kollias G."/>
            <person name="Krishnan S.P."/>
            <person name="Kruger A."/>
            <person name="Kummerfeld S.K."/>
            <person name="Kurochkin I.V."/>
            <person name="Lareau L.F."/>
            <person name="Lazarevic D."/>
            <person name="Lipovich L."/>
            <person name="Liu J."/>
            <person name="Liuni S."/>
            <person name="McWilliam S."/>
            <person name="Madan Babu M."/>
            <person name="Madera M."/>
            <person name="Marchionni L."/>
            <person name="Matsuda H."/>
            <person name="Matsuzawa S."/>
            <person name="Miki H."/>
            <person name="Mignone F."/>
            <person name="Miyake S."/>
            <person name="Morris K."/>
            <person name="Mottagui-Tabar S."/>
            <person name="Mulder N."/>
            <person name="Nakano N."/>
            <person name="Nakauchi H."/>
            <person name="Ng P."/>
            <person name="Nilsson R."/>
            <person name="Nishiguchi S."/>
            <person name="Nishikawa S."/>
            <person name="Nori F."/>
            <person name="Ohara O."/>
            <person name="Okazaki Y."/>
            <person name="Orlando V."/>
            <person name="Pang K.C."/>
            <person name="Pavan W.J."/>
            <person name="Pavesi G."/>
            <person name="Pesole G."/>
            <person name="Petrovsky N."/>
            <person name="Piazza S."/>
            <person name="Reed J."/>
            <person name="Reid J.F."/>
            <person name="Ring B.Z."/>
            <person name="Ringwald M."/>
            <person name="Rost B."/>
            <person name="Ruan Y."/>
            <person name="Salzberg S.L."/>
            <person name="Sandelin A."/>
            <person name="Schneider C."/>
            <person name="Schoenbach C."/>
            <person name="Sekiguchi K."/>
            <person name="Semple C.A."/>
            <person name="Seno S."/>
            <person name="Sessa L."/>
            <person name="Sheng Y."/>
            <person name="Shibata Y."/>
            <person name="Shimada H."/>
            <person name="Shimada K."/>
            <person name="Silva D."/>
            <person name="Sinclair B."/>
            <person name="Sperling S."/>
            <person name="Stupka E."/>
            <person name="Sugiura K."/>
            <person name="Sultana R."/>
            <person name="Takenaka Y."/>
            <person name="Taki K."/>
            <person name="Tammoja K."/>
            <person name="Tan S.L."/>
            <person name="Tang S."/>
            <person name="Taylor M.S."/>
            <person name="Tegner J."/>
            <person name="Teichmann S.A."/>
            <person name="Ueda H.R."/>
            <person name="van Nimwegen E."/>
            <person name="Verardo R."/>
            <person name="Wei C.L."/>
            <person name="Yagi K."/>
            <person name="Yamanishi H."/>
            <person name="Zabarovsky E."/>
            <person name="Zhu S."/>
            <person name="Zimmer A."/>
            <person name="Hide W."/>
            <person name="Bult C."/>
            <person name="Grimmond S.M."/>
            <person name="Teasdale R.D."/>
            <person name="Liu E.T."/>
            <person name="Brusic V."/>
            <person name="Quackenbush J."/>
            <person name="Wahlestedt C."/>
            <person name="Mattick J.S."/>
            <person name="Hume D.A."/>
            <person name="Kai C."/>
            <person name="Sasaki D."/>
            <person name="Tomaru Y."/>
            <person name="Fukuda S."/>
            <person name="Kanamori-Katayama M."/>
            <person name="Suzuki M."/>
            <person name="Aoki J."/>
            <person name="Arakawa T."/>
            <person name="Iida J."/>
            <person name="Imamura K."/>
            <person name="Itoh M."/>
            <person name="Kato T."/>
            <person name="Kawaji H."/>
            <person name="Kawagashira N."/>
            <person name="Kawashima T."/>
            <person name="Kojima M."/>
            <person name="Kondo S."/>
            <person name="Konno H."/>
            <person name="Nakano K."/>
            <person name="Ninomiya N."/>
            <person name="Nishio T."/>
            <person name="Okada M."/>
            <person name="Plessy C."/>
            <person name="Shibata K."/>
            <person name="Shiraki T."/>
            <person name="Suzuki S."/>
            <person name="Tagami M."/>
            <person name="Waki K."/>
            <person name="Watahiki A."/>
            <person name="Okamura-Oho Y."/>
            <person name="Suzuki H."/>
            <person name="Kawai J."/>
            <person name="Hayashizaki Y."/>
        </authorList>
    </citation>
    <scope>NUCLEOTIDE SEQUENCE [LARGE SCALE MRNA]</scope>
    <source>
        <strain>C57BL/6J</strain>
        <tissue>Brain cortex</tissue>
    </source>
</reference>
<reference key="3">
    <citation type="journal article" date="2009" name="PLoS Biol.">
        <title>Lineage-specific biology revealed by a finished genome assembly of the mouse.</title>
        <authorList>
            <person name="Church D.M."/>
            <person name="Goodstadt L."/>
            <person name="Hillier L.W."/>
            <person name="Zody M.C."/>
            <person name="Goldstein S."/>
            <person name="She X."/>
            <person name="Bult C.J."/>
            <person name="Agarwala R."/>
            <person name="Cherry J.L."/>
            <person name="DiCuccio M."/>
            <person name="Hlavina W."/>
            <person name="Kapustin Y."/>
            <person name="Meric P."/>
            <person name="Maglott D."/>
            <person name="Birtle Z."/>
            <person name="Marques A.C."/>
            <person name="Graves T."/>
            <person name="Zhou S."/>
            <person name="Teague B."/>
            <person name="Potamousis K."/>
            <person name="Churas C."/>
            <person name="Place M."/>
            <person name="Herschleb J."/>
            <person name="Runnheim R."/>
            <person name="Forrest D."/>
            <person name="Amos-Landgraf J."/>
            <person name="Schwartz D.C."/>
            <person name="Cheng Z."/>
            <person name="Lindblad-Toh K."/>
            <person name="Eichler E.E."/>
            <person name="Ponting C.P."/>
        </authorList>
    </citation>
    <scope>NUCLEOTIDE SEQUENCE [LARGE SCALE GENOMIC DNA]</scope>
    <source>
        <strain>C57BL/6J</strain>
    </source>
</reference>
<reference key="4">
    <citation type="journal article" date="2004" name="Genome Res.">
        <title>The status, quality, and expansion of the NIH full-length cDNA project: the Mammalian Gene Collection (MGC).</title>
        <authorList>
            <consortium name="The MGC Project Team"/>
        </authorList>
    </citation>
    <scope>NUCLEOTIDE SEQUENCE [LARGE SCALE MRNA]</scope>
</reference>
<organism>
    <name type="scientific">Mus musculus</name>
    <name type="common">Mouse</name>
    <dbReference type="NCBI Taxonomy" id="10090"/>
    <lineage>
        <taxon>Eukaryota</taxon>
        <taxon>Metazoa</taxon>
        <taxon>Chordata</taxon>
        <taxon>Craniata</taxon>
        <taxon>Vertebrata</taxon>
        <taxon>Euteleostomi</taxon>
        <taxon>Mammalia</taxon>
        <taxon>Eutheria</taxon>
        <taxon>Euarchontoglires</taxon>
        <taxon>Glires</taxon>
        <taxon>Rodentia</taxon>
        <taxon>Myomorpha</taxon>
        <taxon>Muroidea</taxon>
        <taxon>Muridae</taxon>
        <taxon>Murinae</taxon>
        <taxon>Mus</taxon>
        <taxon>Mus</taxon>
    </lineage>
</organism>
<feature type="chain" id="PRO_0000082707" description="Ras-like protein family member 10A">
    <location>
        <begin position="1"/>
        <end position="200"/>
    </location>
</feature>
<feature type="propeptide" id="PRO_0000281361" description="Removed in mature form" evidence="1">
    <location>
        <begin position="201"/>
        <end position="203"/>
    </location>
</feature>
<feature type="region of interest" description="Small GTPase-like">
    <location>
        <begin position="1"/>
        <end position="203"/>
    </location>
</feature>
<feature type="short sequence motif" description="Effector region">
    <location>
        <begin position="33"/>
        <end position="42"/>
    </location>
</feature>
<feature type="binding site" evidence="1">
    <location>
        <begin position="11"/>
        <end position="18"/>
    </location>
    <ligand>
        <name>GTP</name>
        <dbReference type="ChEBI" id="CHEBI:37565"/>
    </ligand>
</feature>
<feature type="binding site" evidence="1">
    <location>
        <begin position="59"/>
        <end position="62"/>
    </location>
    <ligand>
        <name>GTP</name>
        <dbReference type="ChEBI" id="CHEBI:37565"/>
    </ligand>
</feature>
<feature type="binding site" evidence="1">
    <location>
        <begin position="129"/>
        <end position="132"/>
    </location>
    <ligand>
        <name>GTP</name>
        <dbReference type="ChEBI" id="CHEBI:37565"/>
    </ligand>
</feature>
<feature type="modified residue" description="Cysteine methyl ester" evidence="1">
    <location>
        <position position="200"/>
    </location>
</feature>
<feature type="lipid moiety-binding region" description="S-farnesyl cysteine" evidence="1">
    <location>
        <position position="200"/>
    </location>
</feature>
<dbReference type="EC" id="3.6.5.2" evidence="2"/>
<dbReference type="EMBL" id="AF498251">
    <property type="protein sequence ID" value="AAM22968.1"/>
    <property type="molecule type" value="mRNA"/>
</dbReference>
<dbReference type="EMBL" id="AK044011">
    <property type="protein sequence ID" value="BAC31738.1"/>
    <property type="molecule type" value="mRNA"/>
</dbReference>
<dbReference type="EMBL" id="AL645522">
    <property type="status" value="NOT_ANNOTATED_CDS"/>
    <property type="molecule type" value="Genomic_DNA"/>
</dbReference>
<dbReference type="EMBL" id="BC107201">
    <property type="protein sequence ID" value="AAI07202.1"/>
    <property type="molecule type" value="mRNA"/>
</dbReference>
<dbReference type="CCDS" id="CCDS24394.1"/>
<dbReference type="RefSeq" id="NP_660251.1">
    <property type="nucleotide sequence ID" value="NM_145216.4"/>
</dbReference>
<dbReference type="SMR" id="Q8K5A4"/>
<dbReference type="FunCoup" id="Q8K5A4">
    <property type="interactions" value="162"/>
</dbReference>
<dbReference type="STRING" id="10090.ENSMUSP00000048453"/>
<dbReference type="PaxDb" id="10090-ENSMUSP00000048453"/>
<dbReference type="ProteomicsDB" id="261006"/>
<dbReference type="Antibodypedia" id="24486">
    <property type="antibodies" value="112 antibodies from 23 providers"/>
</dbReference>
<dbReference type="DNASU" id="75668"/>
<dbReference type="Ensembl" id="ENSMUST00000037218.2">
    <property type="protein sequence ID" value="ENSMUSP00000048453.2"/>
    <property type="gene ID" value="ENSMUSG00000034209.5"/>
</dbReference>
<dbReference type="GeneID" id="75668"/>
<dbReference type="KEGG" id="mmu:75668"/>
<dbReference type="UCSC" id="uc007hvs.1">
    <property type="organism name" value="mouse"/>
</dbReference>
<dbReference type="AGR" id="MGI:1922918"/>
<dbReference type="CTD" id="10633"/>
<dbReference type="MGI" id="MGI:1922918">
    <property type="gene designation" value="Rasl10a"/>
</dbReference>
<dbReference type="VEuPathDB" id="HostDB:ENSMUSG00000034209"/>
<dbReference type="eggNOG" id="KOG0395">
    <property type="taxonomic scope" value="Eukaryota"/>
</dbReference>
<dbReference type="GeneTree" id="ENSGT00940000162366"/>
<dbReference type="HOGENOM" id="CLU_041217_9_3_1"/>
<dbReference type="InParanoid" id="Q8K5A4"/>
<dbReference type="OMA" id="ALHRNRC"/>
<dbReference type="OrthoDB" id="299781at2759"/>
<dbReference type="PhylomeDB" id="Q8K5A4"/>
<dbReference type="TreeFam" id="TF325043"/>
<dbReference type="BioGRID-ORCS" id="75668">
    <property type="hits" value="6 hits in 77 CRISPR screens"/>
</dbReference>
<dbReference type="PRO" id="PR:Q8K5A4"/>
<dbReference type="Proteomes" id="UP000000589">
    <property type="component" value="Chromosome 11"/>
</dbReference>
<dbReference type="RNAct" id="Q8K5A4">
    <property type="molecule type" value="protein"/>
</dbReference>
<dbReference type="Bgee" id="ENSMUSG00000034209">
    <property type="expression patterns" value="Expressed in dentate gyrus of hippocampal formation granule cell and 70 other cell types or tissues"/>
</dbReference>
<dbReference type="GO" id="GO:0005730">
    <property type="term" value="C:nucleolus"/>
    <property type="evidence" value="ECO:0007669"/>
    <property type="project" value="UniProtKB-SubCell"/>
</dbReference>
<dbReference type="GO" id="GO:0005886">
    <property type="term" value="C:plasma membrane"/>
    <property type="evidence" value="ECO:0007669"/>
    <property type="project" value="UniProtKB-SubCell"/>
</dbReference>
<dbReference type="GO" id="GO:0003925">
    <property type="term" value="F:G protein activity"/>
    <property type="evidence" value="ECO:0007669"/>
    <property type="project" value="UniProtKB-EC"/>
</dbReference>
<dbReference type="GO" id="GO:0005525">
    <property type="term" value="F:GTP binding"/>
    <property type="evidence" value="ECO:0007669"/>
    <property type="project" value="UniProtKB-KW"/>
</dbReference>
<dbReference type="FunFam" id="3.40.50.300:FF:000625">
    <property type="entry name" value="Ras-like protein family member 10B"/>
    <property type="match status" value="1"/>
</dbReference>
<dbReference type="Gene3D" id="3.40.50.300">
    <property type="entry name" value="P-loop containing nucleotide triphosphate hydrolases"/>
    <property type="match status" value="1"/>
</dbReference>
<dbReference type="InterPro" id="IPR027417">
    <property type="entry name" value="P-loop_NTPase"/>
</dbReference>
<dbReference type="InterPro" id="IPR052661">
    <property type="entry name" value="Ras-like_GTPase_Reg"/>
</dbReference>
<dbReference type="InterPro" id="IPR001806">
    <property type="entry name" value="Small_GTPase"/>
</dbReference>
<dbReference type="PANTHER" id="PTHR46350">
    <property type="entry name" value="RAS LIKE FAMILY 10 MEMBER B-RELATED"/>
    <property type="match status" value="1"/>
</dbReference>
<dbReference type="PANTHER" id="PTHR46350:SF3">
    <property type="entry name" value="RAS-LIKE PROTEIN FAMILY MEMBER 10A"/>
    <property type="match status" value="1"/>
</dbReference>
<dbReference type="Pfam" id="PF00071">
    <property type="entry name" value="Ras"/>
    <property type="match status" value="1"/>
</dbReference>
<dbReference type="PRINTS" id="PR00449">
    <property type="entry name" value="RASTRNSFRMNG"/>
</dbReference>
<dbReference type="SMART" id="SM00175">
    <property type="entry name" value="RAB"/>
    <property type="match status" value="1"/>
</dbReference>
<dbReference type="SMART" id="SM00173">
    <property type="entry name" value="RAS"/>
    <property type="match status" value="1"/>
</dbReference>
<dbReference type="SMART" id="SM00174">
    <property type="entry name" value="RHO"/>
    <property type="match status" value="1"/>
</dbReference>
<dbReference type="SUPFAM" id="SSF52540">
    <property type="entry name" value="P-loop containing nucleoside triphosphate hydrolases"/>
    <property type="match status" value="1"/>
</dbReference>
<evidence type="ECO:0000250" key="1"/>
<evidence type="ECO:0000250" key="2">
    <source>
        <dbReference type="UniProtKB" id="P01116"/>
    </source>
</evidence>
<evidence type="ECO:0000305" key="3"/>
<accession>Q8K5A4</accession>
<accession>Q3KNN0</accession>
<comment type="function">
    <text evidence="1">Potent inhibitor of cellular proliferation.</text>
</comment>
<comment type="catalytic activity">
    <reaction evidence="2">
        <text>GTP + H2O = GDP + phosphate + H(+)</text>
        <dbReference type="Rhea" id="RHEA:19669"/>
        <dbReference type="ChEBI" id="CHEBI:15377"/>
        <dbReference type="ChEBI" id="CHEBI:15378"/>
        <dbReference type="ChEBI" id="CHEBI:37565"/>
        <dbReference type="ChEBI" id="CHEBI:43474"/>
        <dbReference type="ChEBI" id="CHEBI:58189"/>
        <dbReference type="EC" id="3.6.5.2"/>
    </reaction>
</comment>
<comment type="subcellular location">
    <subcellularLocation>
        <location evidence="3">Cell membrane</location>
        <topology evidence="3">Lipid-anchor</topology>
        <orientation evidence="3">Cytoplasmic side</orientation>
    </subcellularLocation>
    <subcellularLocation>
        <location evidence="1">Nucleus</location>
        <location evidence="1">Nucleolus</location>
    </subcellularLocation>
    <text evidence="1">May cycle in and out of the nucleolus in a GTP-dependent manner.</text>
</comment>
<comment type="PTM">
    <text evidence="1">Isoprenylation is essential for nucleolar localization, and the proliferation-inhibiting activity of RASL10A.</text>
</comment>
<comment type="similarity">
    <text evidence="3">Belongs to the small GTPase superfamily. Ras family.</text>
</comment>
<sequence>MGGSLRVAVLGAPGVGKTAIIRQFLFGDYPERHRPTDSPCLYRPAVLLDGAVYDLSIRDGDVAGPGSSPRSLEEWPDPKDWSLQDTDAFVLVYDICSPDSFDYVKALRQRIAENRPAGAPEAPILVVGNKRDRQRLRFGPRRALATLVRRGWRCGYLECSAKYNWHVLRLFRELLRCALVRTRPAHPTLRLQGALHPARCSLM</sequence>